<sequence>MSEMTPREIVSELNRHIIGQDKAKRAVAIALRNRWRRMQLEESLRVEVTPKNILMIGPTGVGKTEIARRLAKLANAPFIKVEATKFTEVGYVGKEVESIIRDLTDVAVKLTHQQAMEKVKFRAEELAEERVLDALLPPPRDAWGQAEQKEENSSTRQVFRKKLREGQLNDKEIEINVAVPQMGVEIMAPPGMEEMTNQLQGLFQNLAGDTKKKRKMKIKDALKALVEEEAAKLVNQEELKEQAIYNVENNGIVFIDEIDKICKRGEVSGPDVSREGVQRDLLPLIEGSTVSTKHGMVRTDHILFIASGAFQVAKPSDLIPELQGRLPIRVELEALSSNDFKRILTEPKASLTEQYVALMKTEQVDVQFTEDGIKQIADAAWQVNETTENIGARRLHTVLERLMDEISFDATEKAGQAFVIDAAYVKARLGELVEDEDLSRFIL</sequence>
<feature type="chain" id="PRO_1000071856" description="ATP-dependent protease ATPase subunit HslU">
    <location>
        <begin position="1"/>
        <end position="443"/>
    </location>
</feature>
<feature type="binding site" evidence="1">
    <location>
        <position position="18"/>
    </location>
    <ligand>
        <name>ATP</name>
        <dbReference type="ChEBI" id="CHEBI:30616"/>
    </ligand>
</feature>
<feature type="binding site" evidence="1">
    <location>
        <begin position="60"/>
        <end position="65"/>
    </location>
    <ligand>
        <name>ATP</name>
        <dbReference type="ChEBI" id="CHEBI:30616"/>
    </ligand>
</feature>
<feature type="binding site" evidence="1">
    <location>
        <position position="256"/>
    </location>
    <ligand>
        <name>ATP</name>
        <dbReference type="ChEBI" id="CHEBI:30616"/>
    </ligand>
</feature>
<feature type="binding site" evidence="1">
    <location>
        <position position="321"/>
    </location>
    <ligand>
        <name>ATP</name>
        <dbReference type="ChEBI" id="CHEBI:30616"/>
    </ligand>
</feature>
<feature type="binding site" evidence="1">
    <location>
        <position position="393"/>
    </location>
    <ligand>
        <name>ATP</name>
        <dbReference type="ChEBI" id="CHEBI:30616"/>
    </ligand>
</feature>
<name>HSLU_VIBC3</name>
<comment type="function">
    <text evidence="1">ATPase subunit of a proteasome-like degradation complex; this subunit has chaperone activity. The binding of ATP and its subsequent hydrolysis by HslU are essential for unfolding of protein substrates subsequently hydrolyzed by HslV. HslU recognizes the N-terminal part of its protein substrates and unfolds these before they are guided to HslV for hydrolysis.</text>
</comment>
<comment type="subunit">
    <text evidence="1">A double ring-shaped homohexamer of HslV is capped on each side by a ring-shaped HslU homohexamer. The assembly of the HslU/HslV complex is dependent on binding of ATP.</text>
</comment>
<comment type="subcellular location">
    <subcellularLocation>
        <location evidence="1">Cytoplasm</location>
    </subcellularLocation>
</comment>
<comment type="similarity">
    <text evidence="1">Belongs to the ClpX chaperone family. HslU subfamily.</text>
</comment>
<keyword id="KW-0067">ATP-binding</keyword>
<keyword id="KW-0143">Chaperone</keyword>
<keyword id="KW-0963">Cytoplasm</keyword>
<keyword id="KW-0547">Nucleotide-binding</keyword>
<gene>
    <name evidence="1" type="primary">hslU</name>
    <name type="ordered locus">VC0395_A2247</name>
    <name type="ordered locus">VC395_2787</name>
</gene>
<dbReference type="EMBL" id="CP000627">
    <property type="protein sequence ID" value="ABQ19843.1"/>
    <property type="molecule type" value="Genomic_DNA"/>
</dbReference>
<dbReference type="EMBL" id="CP001235">
    <property type="protein sequence ID" value="ACP10772.1"/>
    <property type="molecule type" value="Genomic_DNA"/>
</dbReference>
<dbReference type="RefSeq" id="WP_001293366.1">
    <property type="nucleotide sequence ID" value="NZ_JAACZH010000007.1"/>
</dbReference>
<dbReference type="SMR" id="A5F4X3"/>
<dbReference type="GeneID" id="69718728"/>
<dbReference type="KEGG" id="vco:VC0395_A2247"/>
<dbReference type="KEGG" id="vcr:VC395_2787"/>
<dbReference type="PATRIC" id="fig|345073.21.peg.2684"/>
<dbReference type="eggNOG" id="COG1220">
    <property type="taxonomic scope" value="Bacteria"/>
</dbReference>
<dbReference type="HOGENOM" id="CLU_033123_0_0_6"/>
<dbReference type="OrthoDB" id="9804062at2"/>
<dbReference type="Proteomes" id="UP000000249">
    <property type="component" value="Chromosome 2"/>
</dbReference>
<dbReference type="GO" id="GO:0009376">
    <property type="term" value="C:HslUV protease complex"/>
    <property type="evidence" value="ECO:0007669"/>
    <property type="project" value="UniProtKB-UniRule"/>
</dbReference>
<dbReference type="GO" id="GO:0005524">
    <property type="term" value="F:ATP binding"/>
    <property type="evidence" value="ECO:0007669"/>
    <property type="project" value="UniProtKB-UniRule"/>
</dbReference>
<dbReference type="GO" id="GO:0016887">
    <property type="term" value="F:ATP hydrolysis activity"/>
    <property type="evidence" value="ECO:0007669"/>
    <property type="project" value="InterPro"/>
</dbReference>
<dbReference type="GO" id="GO:0008233">
    <property type="term" value="F:peptidase activity"/>
    <property type="evidence" value="ECO:0007669"/>
    <property type="project" value="InterPro"/>
</dbReference>
<dbReference type="GO" id="GO:0036402">
    <property type="term" value="F:proteasome-activating activity"/>
    <property type="evidence" value="ECO:0007669"/>
    <property type="project" value="UniProtKB-UniRule"/>
</dbReference>
<dbReference type="GO" id="GO:0043335">
    <property type="term" value="P:protein unfolding"/>
    <property type="evidence" value="ECO:0007669"/>
    <property type="project" value="UniProtKB-UniRule"/>
</dbReference>
<dbReference type="GO" id="GO:0051603">
    <property type="term" value="P:proteolysis involved in protein catabolic process"/>
    <property type="evidence" value="ECO:0007669"/>
    <property type="project" value="TreeGrafter"/>
</dbReference>
<dbReference type="CDD" id="cd19498">
    <property type="entry name" value="RecA-like_HslU"/>
    <property type="match status" value="1"/>
</dbReference>
<dbReference type="FunFam" id="1.10.8.10:FF:000028">
    <property type="entry name" value="ATP-dependent protease ATPase subunit HslU"/>
    <property type="match status" value="1"/>
</dbReference>
<dbReference type="FunFam" id="1.10.8.60:FF:000027">
    <property type="entry name" value="ATP-dependent protease ATPase subunit HslU"/>
    <property type="match status" value="1"/>
</dbReference>
<dbReference type="FunFam" id="3.40.50.300:FF:000213">
    <property type="entry name" value="ATP-dependent protease ATPase subunit HslU"/>
    <property type="match status" value="1"/>
</dbReference>
<dbReference type="FunFam" id="3.40.50.300:FF:000220">
    <property type="entry name" value="ATP-dependent protease ATPase subunit HslU"/>
    <property type="match status" value="1"/>
</dbReference>
<dbReference type="Gene3D" id="1.10.8.60">
    <property type="match status" value="1"/>
</dbReference>
<dbReference type="Gene3D" id="3.40.50.300">
    <property type="entry name" value="P-loop containing nucleotide triphosphate hydrolases"/>
    <property type="match status" value="2"/>
</dbReference>
<dbReference type="HAMAP" id="MF_00249">
    <property type="entry name" value="HslU"/>
    <property type="match status" value="1"/>
</dbReference>
<dbReference type="InterPro" id="IPR003593">
    <property type="entry name" value="AAA+_ATPase"/>
</dbReference>
<dbReference type="InterPro" id="IPR050052">
    <property type="entry name" value="ATP-dep_Clp_protease_ClpX"/>
</dbReference>
<dbReference type="InterPro" id="IPR003959">
    <property type="entry name" value="ATPase_AAA_core"/>
</dbReference>
<dbReference type="InterPro" id="IPR019489">
    <property type="entry name" value="Clp_ATPase_C"/>
</dbReference>
<dbReference type="InterPro" id="IPR004491">
    <property type="entry name" value="HslU"/>
</dbReference>
<dbReference type="InterPro" id="IPR027417">
    <property type="entry name" value="P-loop_NTPase"/>
</dbReference>
<dbReference type="NCBIfam" id="TIGR00390">
    <property type="entry name" value="hslU"/>
    <property type="match status" value="1"/>
</dbReference>
<dbReference type="NCBIfam" id="NF003544">
    <property type="entry name" value="PRK05201.1"/>
    <property type="match status" value="1"/>
</dbReference>
<dbReference type="PANTHER" id="PTHR48102">
    <property type="entry name" value="ATP-DEPENDENT CLP PROTEASE ATP-BINDING SUBUNIT CLPX-LIKE, MITOCHONDRIAL-RELATED"/>
    <property type="match status" value="1"/>
</dbReference>
<dbReference type="PANTHER" id="PTHR48102:SF3">
    <property type="entry name" value="ATP-DEPENDENT PROTEASE ATPASE SUBUNIT HSLU"/>
    <property type="match status" value="1"/>
</dbReference>
<dbReference type="Pfam" id="PF00004">
    <property type="entry name" value="AAA"/>
    <property type="match status" value="1"/>
</dbReference>
<dbReference type="Pfam" id="PF07724">
    <property type="entry name" value="AAA_2"/>
    <property type="match status" value="1"/>
</dbReference>
<dbReference type="SMART" id="SM00382">
    <property type="entry name" value="AAA"/>
    <property type="match status" value="1"/>
</dbReference>
<dbReference type="SMART" id="SM01086">
    <property type="entry name" value="ClpB_D2-small"/>
    <property type="match status" value="1"/>
</dbReference>
<dbReference type="SUPFAM" id="SSF52540">
    <property type="entry name" value="P-loop containing nucleoside triphosphate hydrolases"/>
    <property type="match status" value="1"/>
</dbReference>
<reference key="1">
    <citation type="submission" date="2007-03" db="EMBL/GenBank/DDBJ databases">
        <authorList>
            <person name="Heidelberg J."/>
        </authorList>
    </citation>
    <scope>NUCLEOTIDE SEQUENCE [LARGE SCALE GENOMIC DNA]</scope>
    <source>
        <strain>ATCC 39541 / Classical Ogawa 395 / O395</strain>
    </source>
</reference>
<reference key="2">
    <citation type="journal article" date="2008" name="PLoS ONE">
        <title>A recalibrated molecular clock and independent origins for the cholera pandemic clones.</title>
        <authorList>
            <person name="Feng L."/>
            <person name="Reeves P.R."/>
            <person name="Lan R."/>
            <person name="Ren Y."/>
            <person name="Gao C."/>
            <person name="Zhou Z."/>
            <person name="Ren Y."/>
            <person name="Cheng J."/>
            <person name="Wang W."/>
            <person name="Wang J."/>
            <person name="Qian W."/>
            <person name="Li D."/>
            <person name="Wang L."/>
        </authorList>
    </citation>
    <scope>NUCLEOTIDE SEQUENCE [LARGE SCALE GENOMIC DNA]</scope>
    <source>
        <strain>ATCC 39541 / Classical Ogawa 395 / O395</strain>
    </source>
</reference>
<accession>A5F4X3</accession>
<accession>C3LXS2</accession>
<protein>
    <recommendedName>
        <fullName evidence="1">ATP-dependent protease ATPase subunit HslU</fullName>
    </recommendedName>
    <alternativeName>
        <fullName evidence="1">Unfoldase HslU</fullName>
    </alternativeName>
</protein>
<evidence type="ECO:0000255" key="1">
    <source>
        <dbReference type="HAMAP-Rule" id="MF_00249"/>
    </source>
</evidence>
<proteinExistence type="inferred from homology"/>
<organism>
    <name type="scientific">Vibrio cholerae serotype O1 (strain ATCC 39541 / Classical Ogawa 395 / O395)</name>
    <dbReference type="NCBI Taxonomy" id="345073"/>
    <lineage>
        <taxon>Bacteria</taxon>
        <taxon>Pseudomonadati</taxon>
        <taxon>Pseudomonadota</taxon>
        <taxon>Gammaproteobacteria</taxon>
        <taxon>Vibrionales</taxon>
        <taxon>Vibrionaceae</taxon>
        <taxon>Vibrio</taxon>
    </lineage>
</organism>